<keyword id="KW-0963">Cytoplasm</keyword>
<keyword id="KW-0441">Lipid A biosynthesis</keyword>
<keyword id="KW-0444">Lipid biosynthesis</keyword>
<keyword id="KW-0443">Lipid metabolism</keyword>
<keyword id="KW-0456">Lyase</keyword>
<keyword id="KW-1185">Reference proteome</keyword>
<dbReference type="EC" id="4.2.1.59" evidence="1"/>
<dbReference type="EMBL" id="AE013598">
    <property type="protein sequence ID" value="AAW75220.1"/>
    <property type="molecule type" value="Genomic_DNA"/>
</dbReference>
<dbReference type="SMR" id="Q5H1F1"/>
<dbReference type="STRING" id="291331.XOO1966"/>
<dbReference type="KEGG" id="xoo:XOO1966"/>
<dbReference type="HOGENOM" id="CLU_078912_1_0_6"/>
<dbReference type="Proteomes" id="UP000006735">
    <property type="component" value="Chromosome"/>
</dbReference>
<dbReference type="GO" id="GO:0005737">
    <property type="term" value="C:cytoplasm"/>
    <property type="evidence" value="ECO:0007669"/>
    <property type="project" value="UniProtKB-SubCell"/>
</dbReference>
<dbReference type="GO" id="GO:0016020">
    <property type="term" value="C:membrane"/>
    <property type="evidence" value="ECO:0007669"/>
    <property type="project" value="GOC"/>
</dbReference>
<dbReference type="GO" id="GO:0019171">
    <property type="term" value="F:(3R)-hydroxyacyl-[acyl-carrier-protein] dehydratase activity"/>
    <property type="evidence" value="ECO:0007669"/>
    <property type="project" value="UniProtKB-EC"/>
</dbReference>
<dbReference type="GO" id="GO:0006633">
    <property type="term" value="P:fatty acid biosynthetic process"/>
    <property type="evidence" value="ECO:0007669"/>
    <property type="project" value="UniProtKB-UniRule"/>
</dbReference>
<dbReference type="GO" id="GO:0009245">
    <property type="term" value="P:lipid A biosynthetic process"/>
    <property type="evidence" value="ECO:0007669"/>
    <property type="project" value="UniProtKB-UniRule"/>
</dbReference>
<dbReference type="CDD" id="cd01288">
    <property type="entry name" value="FabZ"/>
    <property type="match status" value="1"/>
</dbReference>
<dbReference type="FunFam" id="3.10.129.10:FF:000001">
    <property type="entry name" value="3-hydroxyacyl-[acyl-carrier-protein] dehydratase FabZ"/>
    <property type="match status" value="1"/>
</dbReference>
<dbReference type="Gene3D" id="3.10.129.10">
    <property type="entry name" value="Hotdog Thioesterase"/>
    <property type="match status" value="1"/>
</dbReference>
<dbReference type="HAMAP" id="MF_00406">
    <property type="entry name" value="FabZ"/>
    <property type="match status" value="1"/>
</dbReference>
<dbReference type="InterPro" id="IPR013114">
    <property type="entry name" value="FabA_FabZ"/>
</dbReference>
<dbReference type="InterPro" id="IPR010084">
    <property type="entry name" value="FabZ"/>
</dbReference>
<dbReference type="InterPro" id="IPR029069">
    <property type="entry name" value="HotDog_dom_sf"/>
</dbReference>
<dbReference type="NCBIfam" id="TIGR01750">
    <property type="entry name" value="fabZ"/>
    <property type="match status" value="1"/>
</dbReference>
<dbReference type="NCBIfam" id="NF000582">
    <property type="entry name" value="PRK00006.1"/>
    <property type="match status" value="1"/>
</dbReference>
<dbReference type="PANTHER" id="PTHR30272">
    <property type="entry name" value="3-HYDROXYACYL-[ACYL-CARRIER-PROTEIN] DEHYDRATASE"/>
    <property type="match status" value="1"/>
</dbReference>
<dbReference type="PANTHER" id="PTHR30272:SF1">
    <property type="entry name" value="3-HYDROXYACYL-[ACYL-CARRIER-PROTEIN] DEHYDRATASE"/>
    <property type="match status" value="1"/>
</dbReference>
<dbReference type="Pfam" id="PF07977">
    <property type="entry name" value="FabA"/>
    <property type="match status" value="1"/>
</dbReference>
<dbReference type="SUPFAM" id="SSF54637">
    <property type="entry name" value="Thioesterase/thiol ester dehydrase-isomerase"/>
    <property type="match status" value="1"/>
</dbReference>
<gene>
    <name evidence="1" type="primary">fabZ</name>
    <name type="ordered locus">XOO1966</name>
</gene>
<comment type="function">
    <text evidence="1">Involved in unsaturated fatty acids biosynthesis. Catalyzes the dehydration of short chain beta-hydroxyacyl-ACPs and long chain saturated and unsaturated beta-hydroxyacyl-ACPs.</text>
</comment>
<comment type="catalytic activity">
    <reaction evidence="1">
        <text>a (3R)-hydroxyacyl-[ACP] = a (2E)-enoyl-[ACP] + H2O</text>
        <dbReference type="Rhea" id="RHEA:13097"/>
        <dbReference type="Rhea" id="RHEA-COMP:9925"/>
        <dbReference type="Rhea" id="RHEA-COMP:9945"/>
        <dbReference type="ChEBI" id="CHEBI:15377"/>
        <dbReference type="ChEBI" id="CHEBI:78784"/>
        <dbReference type="ChEBI" id="CHEBI:78827"/>
        <dbReference type="EC" id="4.2.1.59"/>
    </reaction>
</comment>
<comment type="subcellular location">
    <subcellularLocation>
        <location evidence="1">Cytoplasm</location>
    </subcellularLocation>
</comment>
<comment type="similarity">
    <text evidence="1">Belongs to the thioester dehydratase family. FabZ subfamily.</text>
</comment>
<proteinExistence type="inferred from homology"/>
<protein>
    <recommendedName>
        <fullName evidence="1">3-hydroxyacyl-[acyl-carrier-protein] dehydratase FabZ</fullName>
        <ecNumber evidence="1">4.2.1.59</ecNumber>
    </recommendedName>
    <alternativeName>
        <fullName evidence="1">(3R)-hydroxymyristoyl-[acyl-carrier-protein] dehydratase</fullName>
        <shortName evidence="1">(3R)-hydroxymyristoyl-ACP dehydrase</shortName>
    </alternativeName>
    <alternativeName>
        <fullName evidence="1">Beta-hydroxyacyl-ACP dehydratase</fullName>
    </alternativeName>
</protein>
<evidence type="ECO:0000255" key="1">
    <source>
        <dbReference type="HAMAP-Rule" id="MF_00406"/>
    </source>
</evidence>
<name>FABZ_XANOR</name>
<sequence length="153" mass="17064">MSHPAYELPIDVNQIQALIPHRYPFLLIDRVIELDLEAKRIVGQKNVSINEPFFQGHFPTRPVMPGVLIIEALAQAGGVMTQLGLGRDALSKLFYMVKVDNARFNKQVVPGDVLILEVQMKRLIRNMGCYYGEAKVNGEIVASAEIMCAAARE</sequence>
<feature type="chain" id="PRO_0000230851" description="3-hydroxyacyl-[acyl-carrier-protein] dehydratase FabZ">
    <location>
        <begin position="1"/>
        <end position="153"/>
    </location>
</feature>
<feature type="active site" evidence="1">
    <location>
        <position position="57"/>
    </location>
</feature>
<reference key="1">
    <citation type="journal article" date="2005" name="Nucleic Acids Res.">
        <title>The genome sequence of Xanthomonas oryzae pathovar oryzae KACC10331, the bacterial blight pathogen of rice.</title>
        <authorList>
            <person name="Lee B.-M."/>
            <person name="Park Y.-J."/>
            <person name="Park D.-S."/>
            <person name="Kang H.-W."/>
            <person name="Kim J.-G."/>
            <person name="Song E.-S."/>
            <person name="Park I.-C."/>
            <person name="Yoon U.-H."/>
            <person name="Hahn J.-H."/>
            <person name="Koo B.-S."/>
            <person name="Lee G.-B."/>
            <person name="Kim H."/>
            <person name="Park H.-S."/>
            <person name="Yoon K.-O."/>
            <person name="Kim J.-H."/>
            <person name="Jung C.-H."/>
            <person name="Koh N.-H."/>
            <person name="Seo J.-S."/>
            <person name="Go S.-J."/>
        </authorList>
    </citation>
    <scope>NUCLEOTIDE SEQUENCE [LARGE SCALE GENOMIC DNA]</scope>
    <source>
        <strain>KACC10331 / KXO85</strain>
    </source>
</reference>
<organism>
    <name type="scientific">Xanthomonas oryzae pv. oryzae (strain KACC10331 / KXO85)</name>
    <dbReference type="NCBI Taxonomy" id="291331"/>
    <lineage>
        <taxon>Bacteria</taxon>
        <taxon>Pseudomonadati</taxon>
        <taxon>Pseudomonadota</taxon>
        <taxon>Gammaproteobacteria</taxon>
        <taxon>Lysobacterales</taxon>
        <taxon>Lysobacteraceae</taxon>
        <taxon>Xanthomonas</taxon>
    </lineage>
</organism>
<accession>Q5H1F1</accession>